<protein>
    <recommendedName>
        <fullName>Protein farnesyltransferase/geranylgeranyltransferase type-1 subunit alpha</fullName>
        <ecNumber evidence="9 14 15 16">2.5.1.58</ecNumber>
        <ecNumber evidence="11 15">2.5.1.59</ecNumber>
    </recommendedName>
    <alternativeName>
        <fullName>CAAX farnesyltransferase subunit alpha</fullName>
    </alternativeName>
    <alternativeName>
        <fullName>FTase-alpha</fullName>
    </alternativeName>
    <alternativeName>
        <fullName>Ras proteins prenyltransferase subunit alpha</fullName>
    </alternativeName>
    <alternativeName>
        <fullName>Type I protein geranyl-geranyltransferase subunit alpha</fullName>
        <shortName>GGTase-I-alpha</shortName>
    </alternativeName>
</protein>
<dbReference type="EC" id="2.5.1.58" evidence="9 14 15 16"/>
<dbReference type="EC" id="2.5.1.59" evidence="11 15"/>
<dbReference type="EMBL" id="M81225">
    <property type="protein sequence ID" value="AAA41833.1"/>
    <property type="molecule type" value="mRNA"/>
</dbReference>
<dbReference type="PIR" id="A41625">
    <property type="entry name" value="A41625"/>
</dbReference>
<dbReference type="RefSeq" id="NP_036979.1">
    <property type="nucleotide sequence ID" value="NM_012847.1"/>
</dbReference>
<dbReference type="PDB" id="1D8D">
    <property type="method" value="X-ray"/>
    <property type="resolution" value="2.00 A"/>
    <property type="chains" value="A=1-377"/>
</dbReference>
<dbReference type="PDB" id="1D8E">
    <property type="method" value="X-ray"/>
    <property type="resolution" value="3.00 A"/>
    <property type="chains" value="A=1-377"/>
</dbReference>
<dbReference type="PDB" id="1FPP">
    <property type="method" value="X-ray"/>
    <property type="resolution" value="2.75 A"/>
    <property type="chains" value="A=1-377"/>
</dbReference>
<dbReference type="PDB" id="1FT1">
    <property type="method" value="X-ray"/>
    <property type="resolution" value="2.25 A"/>
    <property type="chains" value="A=1-377"/>
</dbReference>
<dbReference type="PDB" id="1FT2">
    <property type="method" value="X-ray"/>
    <property type="resolution" value="3.40 A"/>
    <property type="chains" value="A=55-369"/>
</dbReference>
<dbReference type="PDB" id="1JCR">
    <property type="method" value="X-ray"/>
    <property type="resolution" value="2.00 A"/>
    <property type="chains" value="A=1-377"/>
</dbReference>
<dbReference type="PDB" id="1JCS">
    <property type="method" value="X-ray"/>
    <property type="resolution" value="2.20 A"/>
    <property type="chains" value="A=1-377"/>
</dbReference>
<dbReference type="PDB" id="1KZO">
    <property type="method" value="X-ray"/>
    <property type="resolution" value="2.20 A"/>
    <property type="chains" value="A=1-377"/>
</dbReference>
<dbReference type="PDB" id="1KZP">
    <property type="method" value="X-ray"/>
    <property type="resolution" value="2.10 A"/>
    <property type="chains" value="A=1-377"/>
</dbReference>
<dbReference type="PDB" id="1N4P">
    <property type="method" value="X-ray"/>
    <property type="resolution" value="2.65 A"/>
    <property type="chains" value="A/C/E/G/I/K=1-377"/>
</dbReference>
<dbReference type="PDB" id="1N4Q">
    <property type="method" value="X-ray"/>
    <property type="resolution" value="2.40 A"/>
    <property type="chains" value="A/C/E/G/I/K=1-377"/>
</dbReference>
<dbReference type="PDB" id="1N4R">
    <property type="method" value="X-ray"/>
    <property type="resolution" value="2.80 A"/>
    <property type="chains" value="A/C/E/G/I/K=1-377"/>
</dbReference>
<dbReference type="PDB" id="1N4S">
    <property type="method" value="X-ray"/>
    <property type="resolution" value="2.60 A"/>
    <property type="chains" value="A/C/E/G/I/K=1-377"/>
</dbReference>
<dbReference type="PDB" id="1N94">
    <property type="method" value="X-ray"/>
    <property type="resolution" value="3.50 A"/>
    <property type="chains" value="A=55-369"/>
</dbReference>
<dbReference type="PDB" id="1N95">
    <property type="method" value="X-ray"/>
    <property type="resolution" value="2.30 A"/>
    <property type="chains" value="A=55-369"/>
</dbReference>
<dbReference type="PDB" id="1N9A">
    <property type="method" value="X-ray"/>
    <property type="resolution" value="3.20 A"/>
    <property type="chains" value="A=55-369"/>
</dbReference>
<dbReference type="PDB" id="1NI1">
    <property type="method" value="X-ray"/>
    <property type="resolution" value="2.30 A"/>
    <property type="chains" value="A=55-369"/>
</dbReference>
<dbReference type="PDB" id="1NL4">
    <property type="method" value="X-ray"/>
    <property type="resolution" value="2.70 A"/>
    <property type="chains" value="A=55-366"/>
</dbReference>
<dbReference type="PDB" id="1O1R">
    <property type="method" value="X-ray"/>
    <property type="resolution" value="2.30 A"/>
    <property type="chains" value="A=1-377"/>
</dbReference>
<dbReference type="PDB" id="1O1S">
    <property type="method" value="X-ray"/>
    <property type="resolution" value="2.30 A"/>
    <property type="chains" value="A=1-377"/>
</dbReference>
<dbReference type="PDB" id="1O1T">
    <property type="method" value="X-ray"/>
    <property type="resolution" value="2.10 A"/>
    <property type="chains" value="A=1-377"/>
</dbReference>
<dbReference type="PDB" id="1O5M">
    <property type="method" value="X-ray"/>
    <property type="resolution" value="2.30 A"/>
    <property type="chains" value="A=1-377"/>
</dbReference>
<dbReference type="PDB" id="1QBQ">
    <property type="method" value="X-ray"/>
    <property type="resolution" value="2.40 A"/>
    <property type="chains" value="A=45-377"/>
</dbReference>
<dbReference type="PDB" id="1S64">
    <property type="method" value="X-ray"/>
    <property type="resolution" value="2.55 A"/>
    <property type="chains" value="A/C/E/G/I/K=1-377"/>
</dbReference>
<dbReference type="PDB" id="1SA5">
    <property type="method" value="X-ray"/>
    <property type="resolution" value="2.60 A"/>
    <property type="chains" value="A=1-377"/>
</dbReference>
<dbReference type="PDB" id="1TN7">
    <property type="method" value="X-ray"/>
    <property type="resolution" value="2.30 A"/>
    <property type="chains" value="A=1-377"/>
</dbReference>
<dbReference type="PDB" id="1TN8">
    <property type="method" value="X-ray"/>
    <property type="resolution" value="2.25 A"/>
    <property type="chains" value="A=1-377"/>
</dbReference>
<dbReference type="PDB" id="1TNB">
    <property type="method" value="X-ray"/>
    <property type="resolution" value="2.85 A"/>
    <property type="chains" value="A/C/E/G/I/K=1-377"/>
</dbReference>
<dbReference type="PDB" id="1TNO">
    <property type="method" value="X-ray"/>
    <property type="resolution" value="2.70 A"/>
    <property type="chains" value="A/C/E/G/I/K=1-377"/>
</dbReference>
<dbReference type="PDB" id="1TNU">
    <property type="method" value="X-ray"/>
    <property type="resolution" value="2.70 A"/>
    <property type="chains" value="A/C/E/G/I/K=1-377"/>
</dbReference>
<dbReference type="PDB" id="1TNY">
    <property type="method" value="X-ray"/>
    <property type="resolution" value="2.70 A"/>
    <property type="chains" value="A/C/E/G/I/K=1-377"/>
</dbReference>
<dbReference type="PDB" id="1TNZ">
    <property type="method" value="X-ray"/>
    <property type="resolution" value="2.90 A"/>
    <property type="chains" value="A/C/E/G/I/K=1-377"/>
</dbReference>
<dbReference type="PDB" id="1X81">
    <property type="method" value="X-ray"/>
    <property type="resolution" value="3.50 A"/>
    <property type="chains" value="A=55-369"/>
</dbReference>
<dbReference type="PDB" id="2BED">
    <property type="method" value="X-ray"/>
    <property type="resolution" value="2.70 A"/>
    <property type="chains" value="A=54-366"/>
</dbReference>
<dbReference type="PDB" id="2R2L">
    <property type="method" value="X-ray"/>
    <property type="resolution" value="2.23 A"/>
    <property type="chains" value="A=54-368"/>
</dbReference>
<dbReference type="PDB" id="2ZIR">
    <property type="method" value="X-ray"/>
    <property type="resolution" value="2.40 A"/>
    <property type="chains" value="A=1-377"/>
</dbReference>
<dbReference type="PDB" id="2ZIS">
    <property type="method" value="X-ray"/>
    <property type="resolution" value="2.60 A"/>
    <property type="chains" value="A=1-377"/>
</dbReference>
<dbReference type="PDB" id="3DPY">
    <property type="method" value="X-ray"/>
    <property type="resolution" value="2.70 A"/>
    <property type="chains" value="A=1-377"/>
</dbReference>
<dbReference type="PDB" id="3E30">
    <property type="method" value="X-ray"/>
    <property type="resolution" value="2.45 A"/>
    <property type="chains" value="A=1-377"/>
</dbReference>
<dbReference type="PDB" id="3E32">
    <property type="method" value="X-ray"/>
    <property type="resolution" value="2.45 A"/>
    <property type="chains" value="A=1-377"/>
</dbReference>
<dbReference type="PDB" id="3E33">
    <property type="method" value="X-ray"/>
    <property type="resolution" value="1.90 A"/>
    <property type="chains" value="A=1-377"/>
</dbReference>
<dbReference type="PDB" id="3E34">
    <property type="method" value="X-ray"/>
    <property type="resolution" value="2.05 A"/>
    <property type="chains" value="A=1-377"/>
</dbReference>
<dbReference type="PDB" id="3EU5">
    <property type="method" value="X-ray"/>
    <property type="resolution" value="2.80 A"/>
    <property type="chains" value="A=1-377"/>
</dbReference>
<dbReference type="PDB" id="3EUV">
    <property type="method" value="X-ray"/>
    <property type="resolution" value="2.75 A"/>
    <property type="chains" value="A=1-377"/>
</dbReference>
<dbReference type="PDB" id="3KSL">
    <property type="method" value="X-ray"/>
    <property type="resolution" value="2.05 A"/>
    <property type="chains" value="A=1-377"/>
</dbReference>
<dbReference type="PDB" id="3KSQ">
    <property type="method" value="X-ray"/>
    <property type="resolution" value="2.10 A"/>
    <property type="chains" value="A=1-377"/>
</dbReference>
<dbReference type="PDB" id="3PZ4">
    <property type="method" value="X-ray"/>
    <property type="resolution" value="2.10 A"/>
    <property type="chains" value="A=1-377"/>
</dbReference>
<dbReference type="PDB" id="4GTM">
    <property type="method" value="X-ray"/>
    <property type="resolution" value="2.20 A"/>
    <property type="chains" value="A=1-377"/>
</dbReference>
<dbReference type="PDB" id="4GTO">
    <property type="method" value="X-ray"/>
    <property type="resolution" value="2.15 A"/>
    <property type="chains" value="A=1-377"/>
</dbReference>
<dbReference type="PDB" id="4GTP">
    <property type="method" value="X-ray"/>
    <property type="resolution" value="2.75 A"/>
    <property type="chains" value="A=1-377"/>
</dbReference>
<dbReference type="PDB" id="4GTQ">
    <property type="method" value="X-ray"/>
    <property type="resolution" value="2.60 A"/>
    <property type="chains" value="A=1-377"/>
</dbReference>
<dbReference type="PDB" id="4GTR">
    <property type="method" value="X-ray"/>
    <property type="resolution" value="2.20 A"/>
    <property type="chains" value="A=1-377"/>
</dbReference>
<dbReference type="PDB" id="7RN5">
    <property type="method" value="X-ray"/>
    <property type="resolution" value="2.28 A"/>
    <property type="chains" value="A=1-377"/>
</dbReference>
<dbReference type="PDB" id="7RNI">
    <property type="method" value="X-ray"/>
    <property type="resolution" value="1.98 A"/>
    <property type="chains" value="A=1-377"/>
</dbReference>
<dbReference type="PDB" id="8E9E">
    <property type="method" value="X-ray"/>
    <property type="resolution" value="2.84 A"/>
    <property type="chains" value="A=1-377"/>
</dbReference>
<dbReference type="PDB" id="8RDX">
    <property type="method" value="X-ray"/>
    <property type="resolution" value="3.67 A"/>
    <property type="chains" value="A/C/E/G/I/K=55-368"/>
</dbReference>
<dbReference type="PDBsum" id="1D8D"/>
<dbReference type="PDBsum" id="1D8E"/>
<dbReference type="PDBsum" id="1FPP"/>
<dbReference type="PDBsum" id="1FT1"/>
<dbReference type="PDBsum" id="1FT2"/>
<dbReference type="PDBsum" id="1JCR"/>
<dbReference type="PDBsum" id="1JCS"/>
<dbReference type="PDBsum" id="1KZO"/>
<dbReference type="PDBsum" id="1KZP"/>
<dbReference type="PDBsum" id="1N4P"/>
<dbReference type="PDBsum" id="1N4Q"/>
<dbReference type="PDBsum" id="1N4R"/>
<dbReference type="PDBsum" id="1N4S"/>
<dbReference type="PDBsum" id="1N94"/>
<dbReference type="PDBsum" id="1N95"/>
<dbReference type="PDBsum" id="1N9A"/>
<dbReference type="PDBsum" id="1NI1"/>
<dbReference type="PDBsum" id="1NL4"/>
<dbReference type="PDBsum" id="1O1R"/>
<dbReference type="PDBsum" id="1O1S"/>
<dbReference type="PDBsum" id="1O1T"/>
<dbReference type="PDBsum" id="1O5M"/>
<dbReference type="PDBsum" id="1QBQ"/>
<dbReference type="PDBsum" id="1S64"/>
<dbReference type="PDBsum" id="1SA5"/>
<dbReference type="PDBsum" id="1TN7"/>
<dbReference type="PDBsum" id="1TN8"/>
<dbReference type="PDBsum" id="1TNB"/>
<dbReference type="PDBsum" id="1TNO"/>
<dbReference type="PDBsum" id="1TNU"/>
<dbReference type="PDBsum" id="1TNY"/>
<dbReference type="PDBsum" id="1TNZ"/>
<dbReference type="PDBsum" id="1X81"/>
<dbReference type="PDBsum" id="2BED"/>
<dbReference type="PDBsum" id="2R2L"/>
<dbReference type="PDBsum" id="2ZIR"/>
<dbReference type="PDBsum" id="2ZIS"/>
<dbReference type="PDBsum" id="3DPY"/>
<dbReference type="PDBsum" id="3E30"/>
<dbReference type="PDBsum" id="3E32"/>
<dbReference type="PDBsum" id="3E33"/>
<dbReference type="PDBsum" id="3E34"/>
<dbReference type="PDBsum" id="3EU5"/>
<dbReference type="PDBsum" id="3EUV"/>
<dbReference type="PDBsum" id="3KSL"/>
<dbReference type="PDBsum" id="3KSQ"/>
<dbReference type="PDBsum" id="3PZ4"/>
<dbReference type="PDBsum" id="4GTM"/>
<dbReference type="PDBsum" id="4GTO"/>
<dbReference type="PDBsum" id="4GTP"/>
<dbReference type="PDBsum" id="4GTQ"/>
<dbReference type="PDBsum" id="4GTR"/>
<dbReference type="PDBsum" id="7RN5"/>
<dbReference type="PDBsum" id="7RNI"/>
<dbReference type="PDBsum" id="8E9E"/>
<dbReference type="PDBsum" id="8RDX"/>
<dbReference type="SMR" id="Q04631"/>
<dbReference type="BioGRID" id="247357">
    <property type="interactions" value="1"/>
</dbReference>
<dbReference type="ComplexPortal" id="CPX-2181">
    <property type="entry name" value="Protein farnesyltransferase complex"/>
</dbReference>
<dbReference type="CORUM" id="Q04631"/>
<dbReference type="DIP" id="DIP-6131N"/>
<dbReference type="FunCoup" id="Q04631">
    <property type="interactions" value="3189"/>
</dbReference>
<dbReference type="IntAct" id="Q04631">
    <property type="interactions" value="9"/>
</dbReference>
<dbReference type="STRING" id="10116.ENSRNOP00000019594"/>
<dbReference type="BindingDB" id="Q04631"/>
<dbReference type="ChEMBL" id="CHEMBL2095197"/>
<dbReference type="ChEMBL" id="CHEMBL2111479"/>
<dbReference type="GlyGen" id="Q04631">
    <property type="glycosylation" value="1 site"/>
</dbReference>
<dbReference type="iPTMnet" id="Q04631"/>
<dbReference type="PhosphoSitePlus" id="Q04631"/>
<dbReference type="jPOST" id="Q04631"/>
<dbReference type="PaxDb" id="10116-ENSRNOP00000019594"/>
<dbReference type="GeneID" id="25318"/>
<dbReference type="KEGG" id="rno:25318"/>
<dbReference type="UCSC" id="RGD:2625">
    <property type="organism name" value="rat"/>
</dbReference>
<dbReference type="AGR" id="RGD:2625"/>
<dbReference type="CTD" id="2339"/>
<dbReference type="RGD" id="2625">
    <property type="gene designation" value="Fnta"/>
</dbReference>
<dbReference type="eggNOG" id="KOG0530">
    <property type="taxonomic scope" value="Eukaryota"/>
</dbReference>
<dbReference type="InParanoid" id="Q04631"/>
<dbReference type="OrthoDB" id="272289at2759"/>
<dbReference type="PhylomeDB" id="Q04631"/>
<dbReference type="BRENDA" id="2.5.1.58">
    <property type="organism ID" value="5301"/>
</dbReference>
<dbReference type="BRENDA" id="2.5.1.59">
    <property type="organism ID" value="5301"/>
</dbReference>
<dbReference type="Reactome" id="R-RNO-111465">
    <property type="pathway name" value="Apoptotic cleavage of cellular proteins"/>
</dbReference>
<dbReference type="Reactome" id="R-RNO-2514859">
    <property type="pathway name" value="Inactivation, recovery and regulation of the phototransduction cascade"/>
</dbReference>
<dbReference type="Reactome" id="R-RNO-9648002">
    <property type="pathway name" value="RAS processing"/>
</dbReference>
<dbReference type="SABIO-RK" id="Q04631"/>
<dbReference type="EvolutionaryTrace" id="Q04631"/>
<dbReference type="PRO" id="PR:Q04631"/>
<dbReference type="Proteomes" id="UP000002494">
    <property type="component" value="Unplaced"/>
</dbReference>
<dbReference type="GO" id="GO:0005953">
    <property type="term" value="C:CAAX-protein geranylgeranyltransferase complex"/>
    <property type="evidence" value="ECO:0000314"/>
    <property type="project" value="RGD"/>
</dbReference>
<dbReference type="GO" id="GO:0005737">
    <property type="term" value="C:cytoplasm"/>
    <property type="evidence" value="ECO:0000318"/>
    <property type="project" value="GO_Central"/>
</dbReference>
<dbReference type="GO" id="GO:0005875">
    <property type="term" value="C:microtubule associated complex"/>
    <property type="evidence" value="ECO:0000266"/>
    <property type="project" value="RGD"/>
</dbReference>
<dbReference type="GO" id="GO:0005965">
    <property type="term" value="C:protein farnesyltransferase complex"/>
    <property type="evidence" value="ECO:0000250"/>
    <property type="project" value="UniProtKB"/>
</dbReference>
<dbReference type="GO" id="GO:0010698">
    <property type="term" value="F:acetyltransferase activator activity"/>
    <property type="evidence" value="ECO:0000266"/>
    <property type="project" value="RGD"/>
</dbReference>
<dbReference type="GO" id="GO:0043014">
    <property type="term" value="F:alpha-tubulin binding"/>
    <property type="evidence" value="ECO:0000266"/>
    <property type="project" value="RGD"/>
</dbReference>
<dbReference type="GO" id="GO:0004662">
    <property type="term" value="F:CAAX-protein geranylgeranyltransferase activity"/>
    <property type="evidence" value="ECO:0007669"/>
    <property type="project" value="UniProtKB-EC"/>
</dbReference>
<dbReference type="GO" id="GO:0019899">
    <property type="term" value="F:enzyme binding"/>
    <property type="evidence" value="ECO:0000266"/>
    <property type="project" value="RGD"/>
</dbReference>
<dbReference type="GO" id="GO:0008017">
    <property type="term" value="F:microtubule binding"/>
    <property type="evidence" value="ECO:0000266"/>
    <property type="project" value="RGD"/>
</dbReference>
<dbReference type="GO" id="GO:0060090">
    <property type="term" value="F:molecular adaptor activity"/>
    <property type="evidence" value="ECO:0000266"/>
    <property type="project" value="RGD"/>
</dbReference>
<dbReference type="GO" id="GO:0004660">
    <property type="term" value="F:protein farnesyltransferase activity"/>
    <property type="evidence" value="ECO:0000314"/>
    <property type="project" value="RGD"/>
</dbReference>
<dbReference type="GO" id="GO:0004661">
    <property type="term" value="F:protein geranylgeranyltransferase activity"/>
    <property type="evidence" value="ECO:0000250"/>
    <property type="project" value="UniProtKB"/>
</dbReference>
<dbReference type="GO" id="GO:0004663">
    <property type="term" value="F:Rab geranylgeranyltransferase activity"/>
    <property type="evidence" value="ECO:0000266"/>
    <property type="project" value="RGD"/>
</dbReference>
<dbReference type="GO" id="GO:0030971">
    <property type="term" value="F:receptor tyrosine kinase binding"/>
    <property type="evidence" value="ECO:0000266"/>
    <property type="project" value="RGD"/>
</dbReference>
<dbReference type="GO" id="GO:0007167">
    <property type="term" value="P:enzyme-linked receptor protein signaling pathway"/>
    <property type="evidence" value="ECO:0000266"/>
    <property type="project" value="RGD"/>
</dbReference>
<dbReference type="GO" id="GO:0043066">
    <property type="term" value="P:negative regulation of apoptotic process"/>
    <property type="evidence" value="ECO:0000315"/>
    <property type="project" value="RGD"/>
</dbReference>
<dbReference type="GO" id="GO:0007323">
    <property type="term" value="P:peptide pheromone maturation"/>
    <property type="evidence" value="ECO:0000318"/>
    <property type="project" value="GO_Central"/>
</dbReference>
<dbReference type="GO" id="GO:0045787">
    <property type="term" value="P:positive regulation of cell cycle"/>
    <property type="evidence" value="ECO:0000315"/>
    <property type="project" value="RGD"/>
</dbReference>
<dbReference type="GO" id="GO:0008284">
    <property type="term" value="P:positive regulation of cell population proliferation"/>
    <property type="evidence" value="ECO:0000315"/>
    <property type="project" value="RGD"/>
</dbReference>
<dbReference type="GO" id="GO:0035022">
    <property type="term" value="P:positive regulation of Rac protein signal transduction"/>
    <property type="evidence" value="ECO:0000266"/>
    <property type="project" value="RGD"/>
</dbReference>
<dbReference type="GO" id="GO:1904395">
    <property type="term" value="P:positive regulation of skeletal muscle acetylcholine-gated channel clustering"/>
    <property type="evidence" value="ECO:0000266"/>
    <property type="project" value="RGD"/>
</dbReference>
<dbReference type="GO" id="GO:0018343">
    <property type="term" value="P:protein farnesylation"/>
    <property type="evidence" value="ECO:0000250"/>
    <property type="project" value="UniProtKB"/>
</dbReference>
<dbReference type="GO" id="GO:0018344">
    <property type="term" value="P:protein geranylgeranylation"/>
    <property type="evidence" value="ECO:0000250"/>
    <property type="project" value="UniProtKB"/>
</dbReference>
<dbReference type="GO" id="GO:0060632">
    <property type="term" value="P:regulation of microtubule-based movement"/>
    <property type="evidence" value="ECO:0000266"/>
    <property type="project" value="RGD"/>
</dbReference>
<dbReference type="FunFam" id="1.25.40.120:FF:000002">
    <property type="entry name" value="Protein farnesyltransferase/geranylgeranyltransferase type-1 subunit alpha"/>
    <property type="match status" value="1"/>
</dbReference>
<dbReference type="Gene3D" id="1.25.40.120">
    <property type="entry name" value="Protein prenylyltransferase"/>
    <property type="match status" value="1"/>
</dbReference>
<dbReference type="InterPro" id="IPR002088">
    <property type="entry name" value="Prenyl_trans_a"/>
</dbReference>
<dbReference type="PANTHER" id="PTHR11129">
    <property type="entry name" value="PROTEIN FARNESYLTRANSFERASE ALPHA SUBUNIT/RAB GERANYLGERANYL TRANSFERASE ALPHA SUBUNIT"/>
    <property type="match status" value="1"/>
</dbReference>
<dbReference type="PANTHER" id="PTHR11129:SF1">
    <property type="entry name" value="PROTEIN FARNESYLTRANSFERASE_GERANYLGERANYLTRANSFERASE TYPE-1 SUBUNIT ALPHA"/>
    <property type="match status" value="1"/>
</dbReference>
<dbReference type="Pfam" id="PF01239">
    <property type="entry name" value="PPTA"/>
    <property type="match status" value="5"/>
</dbReference>
<dbReference type="SUPFAM" id="SSF48439">
    <property type="entry name" value="Protein prenylyltransferase"/>
    <property type="match status" value="1"/>
</dbReference>
<dbReference type="PROSITE" id="PS51147">
    <property type="entry name" value="PFTA"/>
    <property type="match status" value="5"/>
</dbReference>
<evidence type="ECO:0000250" key="1">
    <source>
        <dbReference type="UniProtKB" id="P29703"/>
    </source>
</evidence>
<evidence type="ECO:0000250" key="2">
    <source>
        <dbReference type="UniProtKB" id="P49354"/>
    </source>
</evidence>
<evidence type="ECO:0000250" key="3">
    <source>
        <dbReference type="UniProtKB" id="Q61239"/>
    </source>
</evidence>
<evidence type="ECO:0000256" key="4">
    <source>
        <dbReference type="SAM" id="MobiDB-lite"/>
    </source>
</evidence>
<evidence type="ECO:0000269" key="5">
    <source>
    </source>
</evidence>
<evidence type="ECO:0000269" key="6">
    <source>
    </source>
</evidence>
<evidence type="ECO:0000269" key="7">
    <source>
    </source>
</evidence>
<evidence type="ECO:0000269" key="8">
    <source>
    </source>
</evidence>
<evidence type="ECO:0000269" key="9">
    <source>
    </source>
</evidence>
<evidence type="ECO:0000269" key="10">
    <source>
    </source>
</evidence>
<evidence type="ECO:0000269" key="11">
    <source>
    </source>
</evidence>
<evidence type="ECO:0000269" key="12">
    <source>
    </source>
</evidence>
<evidence type="ECO:0000269" key="13">
    <source>
    </source>
</evidence>
<evidence type="ECO:0000269" key="14">
    <source>
    </source>
</evidence>
<evidence type="ECO:0000269" key="15">
    <source>
    </source>
</evidence>
<evidence type="ECO:0000269" key="16">
    <source>
    </source>
</evidence>
<evidence type="ECO:0000269" key="17">
    <source>
    </source>
</evidence>
<evidence type="ECO:0000269" key="18">
    <source>
    </source>
</evidence>
<evidence type="ECO:0000269" key="19">
    <source>
    </source>
</evidence>
<evidence type="ECO:0000269" key="20">
    <source>
    </source>
</evidence>
<evidence type="ECO:0000305" key="21"/>
<evidence type="ECO:0007829" key="22">
    <source>
        <dbReference type="PDB" id="1FPP"/>
    </source>
</evidence>
<evidence type="ECO:0007829" key="23">
    <source>
        <dbReference type="PDB" id="1N4P"/>
    </source>
</evidence>
<evidence type="ECO:0007829" key="24">
    <source>
        <dbReference type="PDB" id="1N94"/>
    </source>
</evidence>
<evidence type="ECO:0007829" key="25">
    <source>
        <dbReference type="PDB" id="1NL4"/>
    </source>
</evidence>
<evidence type="ECO:0007829" key="26">
    <source>
        <dbReference type="PDB" id="2ZIS"/>
    </source>
</evidence>
<evidence type="ECO:0007829" key="27">
    <source>
        <dbReference type="PDB" id="3E33"/>
    </source>
</evidence>
<evidence type="ECO:0007829" key="28">
    <source>
        <dbReference type="PDB" id="7RN5"/>
    </source>
</evidence>
<evidence type="ECO:0007829" key="29">
    <source>
        <dbReference type="PDB" id="7RNI"/>
    </source>
</evidence>
<name>FNTA_RAT</name>
<feature type="initiator methionine" description="Removed" evidence="2">
    <location>
        <position position="1"/>
    </location>
</feature>
<feature type="chain" id="PRO_0000119748" description="Protein farnesyltransferase/geranylgeranyltransferase type-1 subunit alpha">
    <location>
        <begin position="2"/>
        <end position="377"/>
    </location>
</feature>
<feature type="repeat" description="PFTA 1">
    <location>
        <begin position="112"/>
        <end position="146"/>
    </location>
</feature>
<feature type="repeat" description="PFTA 2">
    <location>
        <begin position="147"/>
        <end position="181"/>
    </location>
</feature>
<feature type="repeat" description="PFTA 3">
    <location>
        <begin position="182"/>
        <end position="214"/>
    </location>
</feature>
<feature type="repeat" description="PFTA 4">
    <location>
        <begin position="215"/>
        <end position="249"/>
    </location>
</feature>
<feature type="repeat" description="PFTA 5">
    <location>
        <begin position="255"/>
        <end position="289"/>
    </location>
</feature>
<feature type="region of interest" description="Disordered" evidence="4">
    <location>
        <begin position="1"/>
        <end position="55"/>
    </location>
</feature>
<feature type="compositionally biased region" description="Pro residues" evidence="4">
    <location>
        <begin position="19"/>
        <end position="32"/>
    </location>
</feature>
<feature type="compositionally biased region" description="Low complexity" evidence="4">
    <location>
        <begin position="41"/>
        <end position="51"/>
    </location>
</feature>
<feature type="modified residue" description="N-acetylalanine" evidence="2">
    <location>
        <position position="2"/>
    </location>
</feature>
<feature type="strand" evidence="24">
    <location>
        <begin position="58"/>
        <end position="60"/>
    </location>
</feature>
<feature type="helix" evidence="27">
    <location>
        <begin position="66"/>
        <end position="68"/>
    </location>
</feature>
<feature type="helix" evidence="27">
    <location>
        <begin position="70"/>
        <end position="72"/>
    </location>
</feature>
<feature type="strand" evidence="26">
    <location>
        <begin position="73"/>
        <end position="75"/>
    </location>
</feature>
<feature type="strand" evidence="27">
    <location>
        <begin position="87"/>
        <end position="90"/>
    </location>
</feature>
<feature type="helix" evidence="27">
    <location>
        <begin position="94"/>
        <end position="109"/>
    </location>
</feature>
<feature type="helix" evidence="27">
    <location>
        <begin position="114"/>
        <end position="126"/>
    </location>
</feature>
<feature type="helix" evidence="27">
    <location>
        <begin position="131"/>
        <end position="143"/>
    </location>
</feature>
<feature type="helix" evidence="27">
    <location>
        <begin position="148"/>
        <end position="161"/>
    </location>
</feature>
<feature type="helix" evidence="27">
    <location>
        <begin position="166"/>
        <end position="179"/>
    </location>
</feature>
<feature type="turn" evidence="25">
    <location>
        <begin position="182"/>
        <end position="184"/>
    </location>
</feature>
<feature type="helix" evidence="27">
    <location>
        <begin position="185"/>
        <end position="195"/>
    </location>
</feature>
<feature type="helix" evidence="27">
    <location>
        <begin position="200"/>
        <end position="213"/>
    </location>
</feature>
<feature type="helix" evidence="22">
    <location>
        <begin position="216"/>
        <end position="218"/>
    </location>
</feature>
<feature type="helix" evidence="27">
    <location>
        <begin position="219"/>
        <end position="229"/>
    </location>
</feature>
<feature type="turn" evidence="24">
    <location>
        <begin position="230"/>
        <end position="232"/>
    </location>
</feature>
<feature type="helix" evidence="27">
    <location>
        <begin position="234"/>
        <end position="246"/>
    </location>
</feature>
<feature type="strand" evidence="29">
    <location>
        <begin position="250"/>
        <end position="252"/>
    </location>
</feature>
<feature type="helix" evidence="27">
    <location>
        <begin position="253"/>
        <end position="269"/>
    </location>
</feature>
<feature type="strand" evidence="23">
    <location>
        <begin position="270"/>
        <end position="272"/>
    </location>
</feature>
<feature type="helix" evidence="27">
    <location>
        <begin position="274"/>
        <end position="284"/>
    </location>
</feature>
<feature type="turn" evidence="27">
    <location>
        <begin position="285"/>
        <end position="287"/>
    </location>
</feature>
<feature type="helix" evidence="27">
    <location>
        <begin position="289"/>
        <end position="291"/>
    </location>
</feature>
<feature type="helix" evidence="27">
    <location>
        <begin position="293"/>
        <end position="300"/>
    </location>
</feature>
<feature type="helix" evidence="27">
    <location>
        <begin position="303"/>
        <end position="306"/>
    </location>
</feature>
<feature type="helix" evidence="27">
    <location>
        <begin position="309"/>
        <end position="324"/>
    </location>
</feature>
<feature type="helix" evidence="27">
    <location>
        <begin position="330"/>
        <end position="346"/>
    </location>
</feature>
<feature type="turn" evidence="28">
    <location>
        <begin position="347"/>
        <end position="349"/>
    </location>
</feature>
<feature type="helix" evidence="27">
    <location>
        <begin position="350"/>
        <end position="352"/>
    </location>
</feature>
<feature type="helix" evidence="27">
    <location>
        <begin position="353"/>
        <end position="367"/>
    </location>
</feature>
<feature type="turn" evidence="27">
    <location>
        <begin position="369"/>
        <end position="372"/>
    </location>
</feature>
<comment type="function">
    <text evidence="11 14 15 16">Essential subunit of both the farnesyltransferase and the geranylgeranyltransferase complex. Contributes to the transfer of a farnesyl or geranylgeranyl moiety from farnesyl or geranylgeranyl diphosphate to a cysteine at the fourth position from the C-terminus of several proteins having the C-terminal sequence Cys-aliphatic-aliphatic-X. May positively regulate neuromuscular junction development downstream of MUSK via its function in RAC1 prenylation and activation.</text>
</comment>
<comment type="catalytic activity">
    <reaction evidence="9 14 15 16">
        <text>L-cysteinyl-[protein] + (2E,6E)-farnesyl diphosphate = S-(2E,6E)-farnesyl-L-cysteinyl-[protein] + diphosphate</text>
        <dbReference type="Rhea" id="RHEA:13345"/>
        <dbReference type="Rhea" id="RHEA-COMP:10131"/>
        <dbReference type="Rhea" id="RHEA-COMP:11535"/>
        <dbReference type="ChEBI" id="CHEBI:29950"/>
        <dbReference type="ChEBI" id="CHEBI:33019"/>
        <dbReference type="ChEBI" id="CHEBI:86019"/>
        <dbReference type="ChEBI" id="CHEBI:175763"/>
        <dbReference type="EC" id="2.5.1.58"/>
    </reaction>
</comment>
<comment type="catalytic activity">
    <reaction evidence="11 15">
        <text>geranylgeranyl diphosphate + L-cysteinyl-[protein] = S-geranylgeranyl-L-cysteinyl-[protein] + diphosphate</text>
        <dbReference type="Rhea" id="RHEA:21240"/>
        <dbReference type="Rhea" id="RHEA-COMP:10131"/>
        <dbReference type="Rhea" id="RHEA-COMP:11537"/>
        <dbReference type="ChEBI" id="CHEBI:29950"/>
        <dbReference type="ChEBI" id="CHEBI:33019"/>
        <dbReference type="ChEBI" id="CHEBI:57533"/>
        <dbReference type="ChEBI" id="CHEBI:86021"/>
        <dbReference type="EC" id="2.5.1.59"/>
    </reaction>
</comment>
<comment type="cofactor">
    <cofactor evidence="1">
        <name>Mg(2+)</name>
        <dbReference type="ChEBI" id="CHEBI:18420"/>
    </cofactor>
</comment>
<comment type="activity regulation">
    <text evidence="3">Activated by the AGRIN-induced phosphorylation which is mediated by MUSK.</text>
</comment>
<comment type="subunit">
    <text evidence="5 6 7 8 9 10 11 12 13 14 15 16 17 18 19 20">Heterodimer of FNTA and FNTB (farnesyltransferase) (PubMed:10377218, PubMed:10673434, PubMed:11687658, PubMed:12374986, PubMed:12657282, PubMed:12667062, PubMed:15170324, PubMed:15451670, PubMed:18844669, PubMed:19219049, PubMed:22963166, PubMed:9065406, PubMed:9609683, PubMed:9657673, PubMed:9843427). Heterodimer of FNTA and PGGT1B (geranylgeranyltransferase) (PubMed:14609943).</text>
</comment>
<comment type="interaction">
    <interactant intactId="EBI-602447">
        <id>Q04631</id>
    </interactant>
    <interactant intactId="EBI-602454">
        <id>Q02293</id>
        <label>Fntb</label>
    </interactant>
    <organismsDiffer>false</organismsDiffer>
    <experiments>16</experiments>
</comment>
<comment type="interaction">
    <interactant intactId="EBI-602447">
        <id>Q04631</id>
    </interactant>
    <interactant intactId="EBI-7287667">
        <id>Q63604</id>
        <label>Ntrk2</label>
    </interactant>
    <organismsDiffer>false</organismsDiffer>
    <experiments>4</experiments>
</comment>
<comment type="interaction">
    <interactant intactId="EBI-602447">
        <id>Q04631</id>
    </interactant>
    <interactant intactId="EBI-602610">
        <id>P53610</id>
        <label>Pggt1b</label>
    </interactant>
    <organismsDiffer>false</organismsDiffer>
    <experiments>7</experiments>
</comment>
<comment type="interaction">
    <interactant intactId="EBI-602447">
        <id>Q04631</id>
    </interactant>
    <interactant intactId="EBI-367427">
        <id>P01116-2</id>
        <label>KRAS</label>
    </interactant>
    <organismsDiffer>true</organismsDiffer>
    <experiments>3</experiments>
</comment>
<comment type="PTM">
    <text evidence="3">Phosphorylated. Phosphorylation is mediated by MUSK upon AGRIN stimulation and results in the activation of FNTA (By similarity).</text>
</comment>
<comment type="similarity">
    <text evidence="21">Belongs to the protein prenyltransferase subunit alpha family.</text>
</comment>
<accession>Q04631</accession>
<proteinExistence type="evidence at protein level"/>
<reference key="1">
    <citation type="journal article" date="1991" name="Proc. Natl. Acad. Sci. U.S.A.">
        <title>Cloning and expression of a cDNA encoding the alpha subunit of rat p21ras protein farnesyltransferase.</title>
        <authorList>
            <person name="Chen W.-J."/>
            <person name="Andres D.A."/>
            <person name="Goldstein J.L."/>
            <person name="Brown M.S."/>
        </authorList>
    </citation>
    <scope>NUCLEOTIDE SEQUENCE [MRNA]</scope>
    <scope>PARTIAL PROTEIN SEQUENCE</scope>
    <source>
        <tissue>Brain</tissue>
    </source>
</reference>
<reference key="2">
    <citation type="journal article" date="1997" name="Science">
        <title>Crystal structure of protein farnesyltransferase at 2.25-A resolution.</title>
        <authorList>
            <person name="Park H.-W."/>
            <person name="Boduluri S.R."/>
            <person name="Mooomaw J.F."/>
            <person name="Casey P.J."/>
            <person name="Beese L.S."/>
        </authorList>
    </citation>
    <scope>X-RAY CRYSTALLOGRAPHY (2.25 ANGSTROMS)</scope>
    <scope>SUBUNIT</scope>
</reference>
<reference key="3">
    <citation type="journal article" date="1997" name="Science">
        <authorList>
            <person name="Park H.-W."/>
            <person name="Boduluri S.R."/>
            <person name="Mooomaw J.F."/>
            <person name="Casey P.J."/>
            <person name="Beese L.S."/>
        </authorList>
    </citation>
    <scope>ERRATUM OF PUBMED:9065406</scope>
</reference>
<reference key="4">
    <citation type="journal article" date="1998" name="Biochemistry">
        <title>Protein farnesyltransferase: structure and implications for substrate binding.</title>
        <authorList>
            <person name="Dunten P."/>
            <person name="Kammlott U."/>
            <person name="Crowther R."/>
            <person name="Weber D."/>
            <person name="Palermo R."/>
            <person name="Birktoft J."/>
        </authorList>
    </citation>
    <scope>X-RAY CRYSTALLOGRAPHY (2.75 ANGSTROMS) OF 1-377 IN COMPLEX WITH FNTB</scope>
    <scope>SUBUNIT</scope>
</reference>
<reference key="5">
    <citation type="journal article" date="1998" name="Biochemistry">
        <title>Cocrystal structure of protein farnesyltransferase complexed with a farnesyl diphosphate substrate.</title>
        <authorList>
            <person name="Long S.B."/>
            <person name="Casey P.J."/>
            <person name="Beese L.S."/>
        </authorList>
    </citation>
    <scope>X-RAY CRYSTALLOGRAPHY (3.4 ANGSTROMS)IN COMPLEX WITH FNTB</scope>
    <scope>SUBUNIT</scope>
</reference>
<reference key="6">
    <citation type="journal article" date="1998" name="Biochemistry">
        <title>Crystal structure of farnesyl protein transferase complexed with a CaaX peptide and farnesyl diphosphate analogue.</title>
        <authorList>
            <person name="Strickland C.L."/>
            <person name="Windsor W.T."/>
            <person name="Syto R."/>
            <person name="Wang L."/>
            <person name="Bond R."/>
            <person name="Wu Z."/>
            <person name="Schwartz J."/>
            <person name="Le H.V."/>
            <person name="Beese L.S."/>
            <person name="Weber P.C."/>
        </authorList>
    </citation>
    <scope>X-RAY CRYSTALLOGRAPHY (2.40 ANGSTROMS) OF 45-377 IN COMPLEX WITH FNTB</scope>
    <scope>SUBUNIT</scope>
</reference>
<reference key="7">
    <citation type="journal article" date="1999" name="J. Med. Chem.">
        <title>Tricyclic farnesyl protein transferase inhibitors: crystallographic and calorimetric studies of structure-activity relationships.</title>
        <authorList>
            <person name="Strickland C.L."/>
            <person name="Weber P.C."/>
            <person name="Windsor W.T."/>
            <person name="Wu Z."/>
            <person name="Le H.V."/>
            <person name="Albanese M.M."/>
            <person name="Alvarez C.S."/>
            <person name="Cesarz D."/>
            <person name="del Rosario J."/>
            <person name="Deskus J."/>
            <person name="Mallams A.K."/>
            <person name="Njoroge F.G."/>
            <person name="Piwinski J.J."/>
            <person name="Remiszewski S."/>
            <person name="Rossman R.R."/>
            <person name="Taveras A.G."/>
            <person name="Vibulbhan B."/>
            <person name="Doll R.J."/>
            <person name="Girijavallabhan V.M."/>
            <person name="Ganguly A.K."/>
        </authorList>
    </citation>
    <scope>X-RAY CRYSTALLOGRAPHY (2.30 ANGSTROMS) OF 1-377 IN COMPLEX WITH FNTB</scope>
    <scope>SUBUNIT</scope>
</reference>
<reference key="8">
    <citation type="journal article" date="2000" name="Structure">
        <title>The basis for K-Ras4B binding specificity to protein farnesyltransferase revealed by 2 A resolution ternary complex structures.</title>
        <authorList>
            <person name="Long S.B."/>
            <person name="Casey P.J."/>
            <person name="Beese L.S."/>
        </authorList>
    </citation>
    <scope>X-RAY CRYSTALLOGRAPHY (2.00 ANGSTROMS) OF 1-377 IN COMPLEX WITH FNTB</scope>
    <scope>SUBUNIT</scope>
</reference>
<reference key="9">
    <citation type="journal article" date="2001" name="Proc. Natl. Acad. Sci. U.S.A.">
        <title>The crystal structure of human protein farnesyltransferase reveals the basis for inhibition by CaaX tetrapeptides and their mimetics.</title>
        <authorList>
            <person name="Long S.B."/>
            <person name="Hancock P.J."/>
            <person name="Kral A.M."/>
            <person name="Hellinga H.W."/>
            <person name="Beese L.S."/>
        </authorList>
    </citation>
    <scope>X-RAY CRYSTALLOGRAPHY (2.3 ANGSTROMS) IN COMPLEX WITH FNTB</scope>
    <scope>SUBUNIT</scope>
</reference>
<reference key="10">
    <citation type="journal article" date="2002" name="Nature">
        <title>Reaction path of protein farnesyltransferase at atomic resolution.</title>
        <authorList>
            <person name="Long S.B."/>
            <person name="Casey P.J."/>
            <person name="Beese L.S."/>
        </authorList>
    </citation>
    <scope>X-RAY CRYSTALLOGRAPHY (2.10 ANGSTROMS) OF 1-377 IN COMPLEX WITH FNTB</scope>
    <scope>SUBUNIT</scope>
</reference>
<reference key="11">
    <citation type="journal article" date="2003" name="Biochemistry">
        <title>Biochemical and structural studies with prenyl diphosphate analogues provide insights into isoprenoid recognition by protein farnesyl transferase.</title>
        <authorList>
            <person name="Turek-Etienne T.C."/>
            <person name="Strickland C.L."/>
            <person name="Distefano M.D."/>
        </authorList>
    </citation>
    <scope>X-RAY CRYSTALLOGRAPHY (2.10 ANGSTROMS) OF 1-377 IN COMPLEX WITH FNTB</scope>
    <scope>SUBUNIT</scope>
</reference>
<reference key="12">
    <citation type="journal article" date="2003" name="Bioorg. Med. Chem. Lett.">
        <title>Aryl tetrahydropyridine inhibitors of farnesyltransferase: glycine, phenylalanine and histidine derivatives.</title>
        <authorList>
            <person name="Gwaltney S.L."/>
            <person name="O'Connor S.J."/>
            <person name="Nelson L.T."/>
            <person name="Sullivan G.M."/>
            <person name="Imade H."/>
            <person name="Wang W."/>
            <person name="Hasvold L."/>
            <person name="Li Q."/>
            <person name="Cohen J."/>
            <person name="Gu W.Z."/>
            <person name="Tahir S.K."/>
            <person name="Bauch J."/>
            <person name="Marsh K."/>
            <person name="Ng S.C."/>
            <person name="Frost D.J."/>
            <person name="Zhang H."/>
            <person name="Muchmore S."/>
            <person name="Jakob C.G."/>
            <person name="Stoll V."/>
            <person name="Hutchins C."/>
            <person name="Rosenberg S.H."/>
            <person name="Sham H.L."/>
        </authorList>
    </citation>
    <scope>X-RAY CRYSTALLOGRAPHY (2.30 ANGSTROMS) OF 55-369 IN COMPLEX WITH FNTB</scope>
    <scope>SUBUNIT</scope>
    <scope>CATALYTIC ACTIVITY</scope>
</reference>
<reference key="13">
    <citation type="journal article" date="2003" name="EMBO J.">
        <title>Structure of mammalian protein geranylgeranyltransferase type-I.</title>
        <authorList>
            <person name="Taylor J.S."/>
            <person name="Reid T.S."/>
            <person name="Terry K.L."/>
            <person name="Casey P.J."/>
            <person name="Beese L.S."/>
        </authorList>
    </citation>
    <scope>X-RAY CRYSTALLOGRAPHY (2.40 ANGSTROMS) IN COMPLEX WITH PGGT1B</scope>
    <scope>SUBUNIT</scope>
    <scope>CATALYTIC ACTIVITY</scope>
    <scope>FUNCTION</scope>
</reference>
<reference key="14">
    <citation type="journal article" date="2004" name="Biochemistry">
        <title>Crystal structures of the anticancer clinical candidates R115777 (Tipifarnib) and BMS-214662 complexed with protein farnesyltransferase suggest a mechanism of FTI selectivity.</title>
        <authorList>
            <person name="Reid T.S."/>
            <person name="Beese L.S."/>
        </authorList>
    </citation>
    <scope>X-RAY CRYSTALLOGRAPHY (2.60 ANGSTROMS) IN COMPLEX WITH FNTB</scope>
    <scope>SUBUNIT</scope>
</reference>
<reference key="15">
    <citation type="journal article" date="2004" name="J. Mol. Biol.">
        <title>Crystallographic analysis of CaaX prenyltransferases complexed with substrates defines rules of protein substrate selectivity.</title>
        <authorList>
            <person name="Reid T.S."/>
            <person name="Terry K.L."/>
            <person name="Casey P.J."/>
            <person name="Beese L.S."/>
        </authorList>
    </citation>
    <scope>X-RAY CRYSTALLOGRAPHY (2.25 ANGSTROMS) IN COMPLEX WITH FNTB</scope>
    <scope>SUBUNIT</scope>
</reference>
<reference key="16">
    <citation type="journal article" date="2008" name="Chem. Biol. Drug Des.">
        <title>Caged protein prenyltransferase substrates: tools for understanding protein prenylation.</title>
        <authorList>
            <person name="DeGraw A.J."/>
            <person name="Hast M.A."/>
            <person name="Xu J."/>
            <person name="Mullen D."/>
            <person name="Beese L.S."/>
            <person name="Barany G."/>
            <person name="Distefano M.D."/>
        </authorList>
    </citation>
    <scope>X-RAY CRYSTALLOGRAPHY (2.70 ANGSTROMS) IN COMPLEX WITH FNTB</scope>
    <scope>SUBUNIT</scope>
    <scope>CATALYTIC ACTIVITY</scope>
    <scope>FUNCTION</scope>
</reference>
<reference key="17">
    <citation type="journal article" date="2009" name="Nat. Chem. Biol.">
        <title>Analysis of the eukaryotic prenylome by isoprenoid affinity tagging.</title>
        <authorList>
            <person name="Nguyen U.T."/>
            <person name="Guo Z."/>
            <person name="Delon C."/>
            <person name="Wu Y."/>
            <person name="Deraeve C."/>
            <person name="Franzel B."/>
            <person name="Bon R.S."/>
            <person name="Blankenfeldt W."/>
            <person name="Goody R.S."/>
            <person name="Waldmann H."/>
            <person name="Wolters D."/>
            <person name="Alexandrov K."/>
        </authorList>
    </citation>
    <scope>X-RAY CRYSTALLOGRAPHY (2.75 ANGSTROMS)</scope>
    <scope>SUBUNIT</scope>
    <scope>CATALYTIC ACTIVITY</scope>
    <scope>FUNCTION</scope>
</reference>
<reference key="18">
    <citation type="journal article" date="2012" name="J. Med. Chem.">
        <title>Development of selective, potent RabGGTase inhibitors.</title>
        <authorList>
            <person name="Stigter E.A."/>
            <person name="Guo Z."/>
            <person name="Bon R.S."/>
            <person name="Wu Y.W."/>
            <person name="Choidas A."/>
            <person name="Wolf A."/>
            <person name="Menninger S."/>
            <person name="Waldmann H."/>
            <person name="Blankenfeldt W."/>
            <person name="Goody R.S."/>
        </authorList>
    </citation>
    <scope>X-RAY CRYSTALLOGRAPHY (2.15 ANGSTROMS) IN COMPLEX WITH FNTB</scope>
    <scope>SUBUNIT</scope>
    <scope>CATALYTIC ACTIVITY</scope>
    <scope>FUNCTION</scope>
</reference>
<keyword id="KW-0002">3D-structure</keyword>
<keyword id="KW-0007">Acetylation</keyword>
<keyword id="KW-0903">Direct protein sequencing</keyword>
<keyword id="KW-0460">Magnesium</keyword>
<keyword id="KW-0637">Prenyltransferase</keyword>
<keyword id="KW-1185">Reference proteome</keyword>
<keyword id="KW-0677">Repeat</keyword>
<keyword id="KW-0808">Transferase</keyword>
<organism>
    <name type="scientific">Rattus norvegicus</name>
    <name type="common">Rat</name>
    <dbReference type="NCBI Taxonomy" id="10116"/>
    <lineage>
        <taxon>Eukaryota</taxon>
        <taxon>Metazoa</taxon>
        <taxon>Chordata</taxon>
        <taxon>Craniata</taxon>
        <taxon>Vertebrata</taxon>
        <taxon>Euteleostomi</taxon>
        <taxon>Mammalia</taxon>
        <taxon>Eutheria</taxon>
        <taxon>Euarchontoglires</taxon>
        <taxon>Glires</taxon>
        <taxon>Rodentia</taxon>
        <taxon>Myomorpha</taxon>
        <taxon>Muroidea</taxon>
        <taxon>Muridae</taxon>
        <taxon>Murinae</taxon>
        <taxon>Rattus</taxon>
    </lineage>
</organism>
<gene>
    <name type="primary">Fnta</name>
</gene>
<sequence length="377" mass="44049">MAATEGVGESAPGGEPGQPEQPPPPPPPPPAQQPQEEEMAAEAGEAAASPMDDGFLSLDSPTYVLYRDRAEWADIDPVPQNDGPSPVVQIIYSEKFRDVYDYFRAVLQRDERSERAFKLTRDAIELNAANYTVWHFRRVLLRSLQKDLQEEMNYIIAIIEEQPKNYQVWHHRRVLVEWLKDPSQELEFIADILNQDAKNYHAWQHRQWVIQEFRLWDNELQYVDQLLKEDVRNNSVWNQRHFVISNTTGYSDRAVLEREVQYTLEMIKLVPHNESAWNYLKGILQDRGLSRYPNLLNQLLDLQPSHSSPYLIAFLVDIYEDMLENQCDNKEDILNKALELCEILAKEKDTIRKEYWRYIGRSLQSKHSRESDIPASV</sequence>